<name>ORF0_VZVO</name>
<gene>
    <name type="ORF">ORF0</name>
</gene>
<sequence length="221" mass="23825">MATVHYSRRPGTPPVTLTSSPGMDDVATPIPYLPTYAEAVADAPPPYRSRESLVFSPPLFPHVENGTTQQSYDCLDCAYDGIHRLQLAFLRIRKCCVPAFLILFGILTLTAVVVAIVAVFPEEPPNSTTRNYCPEGEGIYSRLQLVARVCTTKAIYVTKANVAIWSTTPSTLHNLSICIFSCADAFLRDRGLGTSTSGIRTAGGLARTTSGDALFCISSVC</sequence>
<accession>Q9E2H5</accession>
<comment type="subunit">
    <text evidence="6">Interacts with host ITCH; this interaction probably mediates ITCH degradation.</text>
</comment>
<comment type="subcellular location">
    <subcellularLocation>
        <location evidence="3">Host Golgi apparatus membrane</location>
        <topology evidence="5">Single-pass membrane protein</topology>
    </subcellularLocation>
</comment>
<comment type="domain">
    <text evidence="4">Late-budding domains (L domains) are short sequence motifs essential for viral particle budding. They recruit proteins of the host ESCRT machinery (Endosomal Sorting Complex Required for Transport) or ESCRT-associated proteins. Contains one L domain: a PPXY motif which is involved in the interaction with ITCH, a member of the NEDD4 family.</text>
</comment>
<comment type="miscellaneous">
    <text evidence="3">The vaccine strains V-Oka, VariVax, and VarilRix harbor a mutation in the stop codon that extends the ORF by 92 aminoacids.</text>
</comment>
<comment type="similarity">
    <text evidence="5">Belongs to the varicellovirus ORF0 protein family.</text>
</comment>
<keyword id="KW-1040">Host Golgi apparatus</keyword>
<keyword id="KW-1043">Host membrane</keyword>
<keyword id="KW-0472">Membrane</keyword>
<keyword id="KW-1185">Reference proteome</keyword>
<keyword id="KW-0812">Transmembrane</keyword>
<keyword id="KW-1133">Transmembrane helix</keyword>
<protein>
    <recommendedName>
        <fullName>Membrane protein 0</fullName>
    </recommendedName>
    <alternativeName>
        <fullName>Membrane ORF0 protein</fullName>
    </alternativeName>
    <alternativeName>
        <fullName>ORF S/L</fullName>
    </alternativeName>
</protein>
<organismHost>
    <name type="scientific">Homo sapiens</name>
    <name type="common">Human</name>
    <dbReference type="NCBI Taxonomy" id="9606"/>
</organismHost>
<reference key="1">
    <citation type="journal article" date="2000" name="J. Virol.">
        <title>Open reading frame S/L of varicella-zoster virus encodes a cytoplasmic protein expressed in infected cells.</title>
        <authorList>
            <person name="Kemble G.W."/>
            <person name="Annunziato P."/>
            <person name="Lungu O."/>
            <person name="Winter R.E."/>
            <person name="Cha T.A."/>
            <person name="Silverstein S.J."/>
            <person name="Spaete R.R."/>
        </authorList>
    </citation>
    <scope>NUCLEOTIDE SEQUENCE [LARGE SCALE GENOMIC DNA]</scope>
</reference>
<reference key="2">
    <citation type="journal article" date="2002" name="J. Virol.">
        <title>Comparison of the complete DNA sequences of the Oka varicella vaccine and its parental virus.</title>
        <authorList>
            <person name="Gomi Y."/>
            <person name="Sunamachi H."/>
            <person name="Mori Y."/>
            <person name="Nagaike K."/>
            <person name="Takahashi M."/>
            <person name="Yamanishi K."/>
        </authorList>
    </citation>
    <scope>NUCLEOTIDE SEQUENCE [LARGE SCALE GENOMIC DNA]</scope>
    <source>
        <strain>Isolate Human/Japan/P-Oka/1970</strain>
        <strain>Oka varicella vaccine Biken (V-Oka-Biken)</strain>
    </source>
</reference>
<reference key="3">
    <citation type="journal article" date="2008" name="J. Virol.">
        <title>Complete DNA sequences of two oka strain varicella-zoster virus genomes.</title>
        <authorList>
            <person name="Tillieux S.L."/>
            <person name="Halsey W.S."/>
            <person name="Thomas E.S."/>
            <person name="Voycik J.J."/>
            <person name="Sathe G.M."/>
            <person name="Vassilev V."/>
        </authorList>
    </citation>
    <scope>NUCLEOTIDE SEQUENCE [LARGE SCALE GENOMIC DNA]</scope>
    <source>
        <strain>Oka varicella vaccine VarilRix (V-Oka-GSK)</strain>
        <strain>Oka varicella vaccine Varivax (V-Oka-Merck)</strain>
    </source>
</reference>
<reference key="4">
    <citation type="journal article" date="2010" name="J. Virol.">
        <title>The varicella-zoster virus ORFS/L (ORF0) gene is required for efficient viral replication and contains an element involved in DNA cleavage.</title>
        <authorList>
            <person name="Kaufer B.B."/>
            <person name="Smejkal B."/>
            <person name="Osterrieder N."/>
        </authorList>
    </citation>
    <scope>SUBCELLULAR LOCATION</scope>
</reference>
<reference key="5">
    <citation type="journal article" date="2018" name="Sci. Rep.">
        <title>Herpesviruses possess conserved proteins for interaction with Nedd4 family ubiquitin E3 ligases.</title>
        <authorList>
            <person name="Koshizuka T."/>
            <person name="Kobayashi T."/>
            <person name="Ishioka K."/>
            <person name="Suzutani T."/>
        </authorList>
    </citation>
    <scope>INTERACTION WITH HOST ITCH</scope>
    <scope>DOMAIN</scope>
    <scope>MUTAGENESIS OF TYR-47</scope>
</reference>
<evidence type="ECO:0000255" key="1"/>
<evidence type="ECO:0000256" key="2">
    <source>
        <dbReference type="SAM" id="MobiDB-lite"/>
    </source>
</evidence>
<evidence type="ECO:0000269" key="3">
    <source>
    </source>
</evidence>
<evidence type="ECO:0000269" key="4">
    <source>
    </source>
</evidence>
<evidence type="ECO:0000305" key="5"/>
<evidence type="ECO:0000305" key="6">
    <source>
    </source>
</evidence>
<organism>
    <name type="scientific">Varicella-zoster virus (strain Oka vaccine)</name>
    <name type="common">HHV-3</name>
    <name type="synonym">Human herpesvirus 3</name>
    <dbReference type="NCBI Taxonomy" id="341980"/>
    <lineage>
        <taxon>Viruses</taxon>
        <taxon>Duplodnaviria</taxon>
        <taxon>Heunggongvirae</taxon>
        <taxon>Peploviricota</taxon>
        <taxon>Herviviricetes</taxon>
        <taxon>Herpesvirales</taxon>
        <taxon>Orthoherpesviridae</taxon>
        <taxon>Alphaherpesvirinae</taxon>
        <taxon>Varicellovirus</taxon>
        <taxon>Varicellovirus humanalpha3</taxon>
        <taxon>Human herpesvirus 3</taxon>
    </lineage>
</organism>
<proteinExistence type="evidence at protein level"/>
<dbReference type="EMBL" id="AF272392">
    <property type="protein sequence ID" value="AAG29812.1"/>
    <property type="molecule type" value="Genomic_DNA"/>
</dbReference>
<dbReference type="EMBL" id="AB097932">
    <property type="status" value="NOT_ANNOTATED_CDS"/>
    <property type="molecule type" value="Genomic_DNA"/>
</dbReference>
<dbReference type="EMBL" id="AB097933">
    <property type="status" value="NOT_ANNOTATED_CDS"/>
    <property type="molecule type" value="Genomic_DNA"/>
</dbReference>
<dbReference type="EMBL" id="DQ008354">
    <property type="status" value="NOT_ANNOTATED_CDS"/>
    <property type="molecule type" value="Genomic_DNA"/>
</dbReference>
<dbReference type="EMBL" id="DQ008355">
    <property type="status" value="NOT_ANNOTATED_CDS"/>
    <property type="molecule type" value="Genomic_DNA"/>
</dbReference>
<dbReference type="SMR" id="Q9E2H5"/>
<dbReference type="IntAct" id="Q9E2H5">
    <property type="interactions" value="8"/>
</dbReference>
<dbReference type="MINT" id="Q9E2H5"/>
<dbReference type="BRENDA" id="1.3.1.21">
    <property type="organism ID" value="5301"/>
</dbReference>
<dbReference type="Proteomes" id="UP000002603">
    <property type="component" value="Genome"/>
</dbReference>
<dbReference type="Proteomes" id="UP000008504">
    <property type="component" value="Genome"/>
</dbReference>
<dbReference type="Proteomes" id="UP000008505">
    <property type="component" value="Genome"/>
</dbReference>
<dbReference type="Proteomes" id="UP000008506">
    <property type="component" value="Genome"/>
</dbReference>
<dbReference type="Proteomes" id="UP000008507">
    <property type="component" value="Genome"/>
</dbReference>
<dbReference type="GO" id="GO:0044178">
    <property type="term" value="C:host cell Golgi membrane"/>
    <property type="evidence" value="ECO:0007669"/>
    <property type="project" value="UniProtKB-SubCell"/>
</dbReference>
<dbReference type="GO" id="GO:0016020">
    <property type="term" value="C:membrane"/>
    <property type="evidence" value="ECO:0007669"/>
    <property type="project" value="UniProtKB-KW"/>
</dbReference>
<feature type="chain" id="PRO_0000385142" description="Membrane protein 0">
    <location>
        <begin position="1"/>
        <end position="221"/>
    </location>
</feature>
<feature type="transmembrane region" description="Helical" evidence="1">
    <location>
        <begin position="100"/>
        <end position="120"/>
    </location>
</feature>
<feature type="region of interest" description="Disordered" evidence="2">
    <location>
        <begin position="1"/>
        <end position="22"/>
    </location>
</feature>
<feature type="short sequence motif" description="PPXY motif" evidence="4">
    <location>
        <begin position="44"/>
        <end position="47"/>
    </location>
</feature>
<feature type="mutagenesis site" description="Complete loss of interaction with host ITCH." evidence="4">
    <original>Y</original>
    <variation>A</variation>
    <location>
        <position position="47"/>
    </location>
</feature>